<reference key="1">
    <citation type="journal article" date="2011" name="Stand. Genomic Sci.">
        <title>Complete genome sequence of the filamentous gliding predatory bacterium Herpetosiphon aurantiacus type strain (114-95(T)).</title>
        <authorList>
            <person name="Kiss H."/>
            <person name="Nett M."/>
            <person name="Domin N."/>
            <person name="Martin K."/>
            <person name="Maresca J.A."/>
            <person name="Copeland A."/>
            <person name="Lapidus A."/>
            <person name="Lucas S."/>
            <person name="Berry K.W."/>
            <person name="Glavina Del Rio T."/>
            <person name="Dalin E."/>
            <person name="Tice H."/>
            <person name="Pitluck S."/>
            <person name="Richardson P."/>
            <person name="Bruce D."/>
            <person name="Goodwin L."/>
            <person name="Han C."/>
            <person name="Detter J.C."/>
            <person name="Schmutz J."/>
            <person name="Brettin T."/>
            <person name="Land M."/>
            <person name="Hauser L."/>
            <person name="Kyrpides N.C."/>
            <person name="Ivanova N."/>
            <person name="Goeker M."/>
            <person name="Woyke T."/>
            <person name="Klenk H.P."/>
            <person name="Bryant D.A."/>
        </authorList>
    </citation>
    <scope>NUCLEOTIDE SEQUENCE [LARGE SCALE GENOMIC DNA]</scope>
    <source>
        <strain>ATCC 23779 / DSM 785 / 114-95</strain>
    </source>
</reference>
<gene>
    <name evidence="1" type="primary">dnaA</name>
    <name type="ordered locus">Haur_0001</name>
</gene>
<evidence type="ECO:0000255" key="1">
    <source>
        <dbReference type="HAMAP-Rule" id="MF_00377"/>
    </source>
</evidence>
<dbReference type="EMBL" id="CP000875">
    <property type="protein sequence ID" value="ABX02653.1"/>
    <property type="molecule type" value="Genomic_DNA"/>
</dbReference>
<dbReference type="SMR" id="A9B496"/>
<dbReference type="FunCoup" id="A9B496">
    <property type="interactions" value="366"/>
</dbReference>
<dbReference type="STRING" id="316274.Haur_0001"/>
<dbReference type="KEGG" id="hau:Haur_0001"/>
<dbReference type="eggNOG" id="COG0593">
    <property type="taxonomic scope" value="Bacteria"/>
</dbReference>
<dbReference type="HOGENOM" id="CLU_026910_3_1_0"/>
<dbReference type="InParanoid" id="A9B496"/>
<dbReference type="Proteomes" id="UP000000787">
    <property type="component" value="Chromosome"/>
</dbReference>
<dbReference type="GO" id="GO:0005737">
    <property type="term" value="C:cytoplasm"/>
    <property type="evidence" value="ECO:0007669"/>
    <property type="project" value="UniProtKB-SubCell"/>
</dbReference>
<dbReference type="GO" id="GO:0005886">
    <property type="term" value="C:plasma membrane"/>
    <property type="evidence" value="ECO:0007669"/>
    <property type="project" value="TreeGrafter"/>
</dbReference>
<dbReference type="GO" id="GO:0005524">
    <property type="term" value="F:ATP binding"/>
    <property type="evidence" value="ECO:0007669"/>
    <property type="project" value="UniProtKB-UniRule"/>
</dbReference>
<dbReference type="GO" id="GO:0016887">
    <property type="term" value="F:ATP hydrolysis activity"/>
    <property type="evidence" value="ECO:0007669"/>
    <property type="project" value="InterPro"/>
</dbReference>
<dbReference type="GO" id="GO:0003688">
    <property type="term" value="F:DNA replication origin binding"/>
    <property type="evidence" value="ECO:0007669"/>
    <property type="project" value="UniProtKB-UniRule"/>
</dbReference>
<dbReference type="GO" id="GO:0008289">
    <property type="term" value="F:lipid binding"/>
    <property type="evidence" value="ECO:0007669"/>
    <property type="project" value="UniProtKB-KW"/>
</dbReference>
<dbReference type="GO" id="GO:0006270">
    <property type="term" value="P:DNA replication initiation"/>
    <property type="evidence" value="ECO:0007669"/>
    <property type="project" value="UniProtKB-UniRule"/>
</dbReference>
<dbReference type="GO" id="GO:0006275">
    <property type="term" value="P:regulation of DNA replication"/>
    <property type="evidence" value="ECO:0007669"/>
    <property type="project" value="UniProtKB-UniRule"/>
</dbReference>
<dbReference type="CDD" id="cd00009">
    <property type="entry name" value="AAA"/>
    <property type="match status" value="1"/>
</dbReference>
<dbReference type="CDD" id="cd06571">
    <property type="entry name" value="Bac_DnaA_C"/>
    <property type="match status" value="1"/>
</dbReference>
<dbReference type="FunFam" id="1.10.8.60:FF:000003">
    <property type="entry name" value="Chromosomal replication initiator protein DnaA"/>
    <property type="match status" value="1"/>
</dbReference>
<dbReference type="FunFam" id="3.40.50.300:FF:000150">
    <property type="entry name" value="Chromosomal replication initiator protein DnaA"/>
    <property type="match status" value="1"/>
</dbReference>
<dbReference type="Gene3D" id="1.10.1750.10">
    <property type="match status" value="1"/>
</dbReference>
<dbReference type="Gene3D" id="1.10.8.60">
    <property type="match status" value="1"/>
</dbReference>
<dbReference type="Gene3D" id="3.30.300.180">
    <property type="match status" value="1"/>
</dbReference>
<dbReference type="Gene3D" id="3.40.50.300">
    <property type="entry name" value="P-loop containing nucleotide triphosphate hydrolases"/>
    <property type="match status" value="1"/>
</dbReference>
<dbReference type="HAMAP" id="MF_00377">
    <property type="entry name" value="DnaA_bact"/>
    <property type="match status" value="1"/>
</dbReference>
<dbReference type="InterPro" id="IPR003593">
    <property type="entry name" value="AAA+_ATPase"/>
</dbReference>
<dbReference type="InterPro" id="IPR001957">
    <property type="entry name" value="Chromosome_initiator_DnaA"/>
</dbReference>
<dbReference type="InterPro" id="IPR020591">
    <property type="entry name" value="Chromosome_initiator_DnaA-like"/>
</dbReference>
<dbReference type="InterPro" id="IPR018312">
    <property type="entry name" value="Chromosome_initiator_DnaA_CS"/>
</dbReference>
<dbReference type="InterPro" id="IPR013159">
    <property type="entry name" value="DnaA_C"/>
</dbReference>
<dbReference type="InterPro" id="IPR013317">
    <property type="entry name" value="DnaA_dom"/>
</dbReference>
<dbReference type="InterPro" id="IPR024633">
    <property type="entry name" value="DnaA_N_dom"/>
</dbReference>
<dbReference type="InterPro" id="IPR038454">
    <property type="entry name" value="DnaA_N_sf"/>
</dbReference>
<dbReference type="InterPro" id="IPR027417">
    <property type="entry name" value="P-loop_NTPase"/>
</dbReference>
<dbReference type="InterPro" id="IPR010921">
    <property type="entry name" value="Trp_repressor/repl_initiator"/>
</dbReference>
<dbReference type="NCBIfam" id="TIGR00362">
    <property type="entry name" value="DnaA"/>
    <property type="match status" value="1"/>
</dbReference>
<dbReference type="PANTHER" id="PTHR30050">
    <property type="entry name" value="CHROMOSOMAL REPLICATION INITIATOR PROTEIN DNAA"/>
    <property type="match status" value="1"/>
</dbReference>
<dbReference type="PANTHER" id="PTHR30050:SF2">
    <property type="entry name" value="CHROMOSOMAL REPLICATION INITIATOR PROTEIN DNAA"/>
    <property type="match status" value="1"/>
</dbReference>
<dbReference type="Pfam" id="PF00308">
    <property type="entry name" value="Bac_DnaA"/>
    <property type="match status" value="1"/>
</dbReference>
<dbReference type="Pfam" id="PF08299">
    <property type="entry name" value="Bac_DnaA_C"/>
    <property type="match status" value="1"/>
</dbReference>
<dbReference type="Pfam" id="PF11638">
    <property type="entry name" value="DnaA_N"/>
    <property type="match status" value="1"/>
</dbReference>
<dbReference type="PRINTS" id="PR00051">
    <property type="entry name" value="DNAA"/>
</dbReference>
<dbReference type="SMART" id="SM00382">
    <property type="entry name" value="AAA"/>
    <property type="match status" value="1"/>
</dbReference>
<dbReference type="SMART" id="SM00760">
    <property type="entry name" value="Bac_DnaA_C"/>
    <property type="match status" value="1"/>
</dbReference>
<dbReference type="SUPFAM" id="SSF52540">
    <property type="entry name" value="P-loop containing nucleoside triphosphate hydrolases"/>
    <property type="match status" value="1"/>
</dbReference>
<dbReference type="SUPFAM" id="SSF48295">
    <property type="entry name" value="TrpR-like"/>
    <property type="match status" value="1"/>
</dbReference>
<dbReference type="PROSITE" id="PS01008">
    <property type="entry name" value="DNAA"/>
    <property type="match status" value="1"/>
</dbReference>
<protein>
    <recommendedName>
        <fullName evidence="1">Chromosomal replication initiator protein DnaA</fullName>
    </recommendedName>
</protein>
<feature type="chain" id="PRO_1000121988" description="Chromosomal replication initiator protein DnaA">
    <location>
        <begin position="1"/>
        <end position="472"/>
    </location>
</feature>
<feature type="region of interest" description="Domain I, interacts with DnaA modulators" evidence="1">
    <location>
        <begin position="1"/>
        <end position="80"/>
    </location>
</feature>
<feature type="region of interest" description="Domain II" evidence="1">
    <location>
        <begin position="80"/>
        <end position="130"/>
    </location>
</feature>
<feature type="region of interest" description="Domain III, AAA+ region" evidence="1">
    <location>
        <begin position="131"/>
        <end position="347"/>
    </location>
</feature>
<feature type="region of interest" description="Domain IV, binds dsDNA" evidence="1">
    <location>
        <begin position="348"/>
        <end position="472"/>
    </location>
</feature>
<feature type="binding site" evidence="1">
    <location>
        <position position="175"/>
    </location>
    <ligand>
        <name>ATP</name>
        <dbReference type="ChEBI" id="CHEBI:30616"/>
    </ligand>
</feature>
<feature type="binding site" evidence="1">
    <location>
        <position position="177"/>
    </location>
    <ligand>
        <name>ATP</name>
        <dbReference type="ChEBI" id="CHEBI:30616"/>
    </ligand>
</feature>
<feature type="binding site" evidence="1">
    <location>
        <position position="178"/>
    </location>
    <ligand>
        <name>ATP</name>
        <dbReference type="ChEBI" id="CHEBI:30616"/>
    </ligand>
</feature>
<feature type="binding site" evidence="1">
    <location>
        <position position="179"/>
    </location>
    <ligand>
        <name>ATP</name>
        <dbReference type="ChEBI" id="CHEBI:30616"/>
    </ligand>
</feature>
<accession>A9B496</accession>
<proteinExistence type="inferred from homology"/>
<organism>
    <name type="scientific">Herpetosiphon aurantiacus (strain ATCC 23779 / DSM 785 / 114-95)</name>
    <dbReference type="NCBI Taxonomy" id="316274"/>
    <lineage>
        <taxon>Bacteria</taxon>
        <taxon>Bacillati</taxon>
        <taxon>Chloroflexota</taxon>
        <taxon>Chloroflexia</taxon>
        <taxon>Herpetosiphonales</taxon>
        <taxon>Herpetosiphonaceae</taxon>
        <taxon>Herpetosiphon</taxon>
    </lineage>
</organism>
<sequence>MDTKQIWFTTLGTLQNQILRYDYDTWLKTTALVSVANDLAVIGAPNVTTKQVIEDRFMSVLRRALGEVLGYQVNVRVIISSATPAPSEPVAVTPSEPSPTTEVAEPSFASFNQAAPMLNQLPLGDPNRSSVLNPRYTFSSFIVGTSNRLAHAACMAVAEHPAQAYNPLFLYGGVGLGKTHLLQAIGNYALDRNPEVNVLYVSSEKFTNDLINAIRRQQTEEFRIRYRNIDILLIDDIQFIAGKEGTQEEFFHTFNTLHGAGKQIVLSSDRPPKAILTLEERLRSRFEWGLIVDVQNPDLETRTAILRAKGETLQVPVSSEVIDFLAQRIQSNIRELEGCLNRVIAYANLNRTPVTVEVASAALADLLDTSRRKRVTADDIFREVSQHYGIDQRAIRGRGRSRNVVLPRQVVMYLLREETDASLVEIGELLGGRDHTTVMHGYNKITDDLTSDARLRNDITSLRQRLYGENAR</sequence>
<name>DNAA_HERA2</name>
<keyword id="KW-0067">ATP-binding</keyword>
<keyword id="KW-0963">Cytoplasm</keyword>
<keyword id="KW-0235">DNA replication</keyword>
<keyword id="KW-0238">DNA-binding</keyword>
<keyword id="KW-0446">Lipid-binding</keyword>
<keyword id="KW-0547">Nucleotide-binding</keyword>
<comment type="function">
    <text evidence="1">Plays an essential role in the initiation and regulation of chromosomal replication. ATP-DnaA binds to the origin of replication (oriC) to initiate formation of the DNA replication initiation complex once per cell cycle. Binds the DnaA box (a 9 base pair repeat at the origin) and separates the double-stranded (ds)DNA. Forms a right-handed helical filament on oriC DNA; dsDNA binds to the exterior of the filament while single-stranded (ss)DNA is stabiized in the filament's interior. The ATP-DnaA-oriC complex binds and stabilizes one strand of the AT-rich DNA unwinding element (DUE), permitting loading of DNA polymerase. After initiation quickly degrades to an ADP-DnaA complex that is not apt for DNA replication. Binds acidic phospholipids.</text>
</comment>
<comment type="subunit">
    <text evidence="1">Oligomerizes as a right-handed, spiral filament on DNA at oriC.</text>
</comment>
<comment type="subcellular location">
    <subcellularLocation>
        <location evidence="1">Cytoplasm</location>
    </subcellularLocation>
</comment>
<comment type="domain">
    <text evidence="1">Domain I is involved in oligomerization and binding regulators, domain II is flexibile and of varying length in different bacteria, domain III forms the AAA+ region, while domain IV binds dsDNA.</text>
</comment>
<comment type="similarity">
    <text evidence="1">Belongs to the DnaA family.</text>
</comment>